<keyword id="KW-0963">Cytoplasm</keyword>
<keyword id="KW-0206">Cytoskeleton</keyword>
<keyword id="KW-0342">GTP-binding</keyword>
<keyword id="KW-0378">Hydrolase</keyword>
<keyword id="KW-0460">Magnesium</keyword>
<keyword id="KW-0479">Metal-binding</keyword>
<keyword id="KW-0493">Microtubule</keyword>
<keyword id="KW-0547">Nucleotide-binding</keyword>
<keyword id="KW-1185">Reference proteome</keyword>
<comment type="function">
    <text>Tubulin is the major constituent of microtubules, a cylinder consisting of laterally associated linear protofilaments composed of alpha- and beta-tubulin heterodimers. Microtubules grow by the addition of GTP-tubulin dimers to the microtubule end, where a stabilizing cap forms. Below the cap, tubulin dimers are in GDP-bound state, owing to GTPase activity of alpha-tubulin.</text>
</comment>
<comment type="catalytic activity">
    <reaction evidence="1">
        <text>GTP + H2O = GDP + phosphate + H(+)</text>
        <dbReference type="Rhea" id="RHEA:19669"/>
        <dbReference type="ChEBI" id="CHEBI:15377"/>
        <dbReference type="ChEBI" id="CHEBI:15378"/>
        <dbReference type="ChEBI" id="CHEBI:37565"/>
        <dbReference type="ChEBI" id="CHEBI:43474"/>
        <dbReference type="ChEBI" id="CHEBI:58189"/>
    </reaction>
    <physiologicalReaction direction="left-to-right" evidence="1">
        <dbReference type="Rhea" id="RHEA:19670"/>
    </physiologicalReaction>
</comment>
<comment type="cofactor">
    <cofactor evidence="1">
        <name>Mg(2+)</name>
        <dbReference type="ChEBI" id="CHEBI:18420"/>
    </cofactor>
</comment>
<comment type="subunit">
    <text>Dimer of alpha and beta chains. A typical microtubule is a hollow water-filled tube with an outer diameter of 25 nm and an inner diameter of 15 nM. Alpha-beta heterodimers associate head-to-tail to form protofilaments running lengthwise along the microtubule wall with the beta-tubulin subunit facing the microtubule plus end conferring a structural polarity. Microtubules usually have 13 protofilaments but different protofilament numbers can be found in some organisms and specialized cells.</text>
</comment>
<comment type="subcellular location">
    <subcellularLocation>
        <location>Cytoplasm</location>
        <location>Cytoskeleton</location>
    </subcellularLocation>
</comment>
<comment type="tissue specificity">
    <text>Testis specific.</text>
</comment>
<comment type="domain">
    <text evidence="1">The MREC motif may be critical for tubulin autoregulation.</text>
</comment>
<comment type="PTM">
    <text evidence="2">Some glutamate residues at the C-terminus are polyglycylated, resulting in polyglycine chains on the gamma-carboxyl group. Glycylation is mainly limited to tubulin incorporated into axonemes (cilia and flagella) whereas glutamylation is prevalent in neuronal cells, centrioles, axonemes, and the mitotic spindle. Both modifications can coexist on the same protein on adjacent residues, and lowering polyglycylation levels increases polyglutamylation, and reciprocally. The precise function of polyglycylation is still unclear.</text>
</comment>
<comment type="PTM">
    <text evidence="2 3">Some glutamate residues at the C-terminus are polyglutamylated, resulting in polyglutamate chains on the gamma-carboxyl group (By similarity). Polyglutamylation plays a key role in microtubule severing by spastin (SPAST). SPAST preferentially recognizes and acts on microtubules decorated with short polyglutamate tails: severing activity by SPAST increases as the number of glutamates per tubulin rises from one to eight, but decreases beyond this glutamylation threshold (By similarity).</text>
</comment>
<comment type="miscellaneous">
    <text>This tubulin does not have a C-terminal tyrosine.</text>
</comment>
<comment type="miscellaneous">
    <text>There are at least seven alpha tubulin genes (alpha-1 to alpha-6, and alpha-8), and a pseudogene (alpha-7) in chicken.</text>
</comment>
<comment type="similarity">
    <text evidence="4">Belongs to the tubulin family.</text>
</comment>
<accession>P08070</accession>
<organism>
    <name type="scientific">Gallus gallus</name>
    <name type="common">Chicken</name>
    <dbReference type="NCBI Taxonomy" id="9031"/>
    <lineage>
        <taxon>Eukaryota</taxon>
        <taxon>Metazoa</taxon>
        <taxon>Chordata</taxon>
        <taxon>Craniata</taxon>
        <taxon>Vertebrata</taxon>
        <taxon>Euteleostomi</taxon>
        <taxon>Archelosauria</taxon>
        <taxon>Archosauria</taxon>
        <taxon>Dinosauria</taxon>
        <taxon>Saurischia</taxon>
        <taxon>Theropoda</taxon>
        <taxon>Coelurosauria</taxon>
        <taxon>Aves</taxon>
        <taxon>Neognathae</taxon>
        <taxon>Galloanserae</taxon>
        <taxon>Galliformes</taxon>
        <taxon>Phasianidae</taxon>
        <taxon>Phasianinae</taxon>
        <taxon>Gallus</taxon>
    </lineage>
</organism>
<reference key="1">
    <citation type="journal article" date="1987" name="Mol. Cell. Biol.">
        <title>A divergent testis-specific alpha-tubulin isotype that does not contain a coded C-terminal tyrosine.</title>
        <authorList>
            <person name="Pratt L.F."/>
            <person name="Okamura S."/>
            <person name="Cleveland D.W."/>
        </authorList>
    </citation>
    <scope>NUCLEOTIDE SEQUENCE [MRNA]</scope>
</reference>
<dbReference type="EC" id="3.6.5.-" evidence="1"/>
<dbReference type="EMBL" id="M16030">
    <property type="protein sequence ID" value="AAA49122.1"/>
    <property type="molecule type" value="mRNA"/>
</dbReference>
<dbReference type="PIR" id="A26724">
    <property type="entry name" value="A26724"/>
</dbReference>
<dbReference type="RefSeq" id="NP_990775.1">
    <property type="nucleotide sequence ID" value="NM_205444.1"/>
</dbReference>
<dbReference type="SMR" id="P08070"/>
<dbReference type="BioGRID" id="676675">
    <property type="interactions" value="1"/>
</dbReference>
<dbReference type="FunCoup" id="P08070">
    <property type="interactions" value="393"/>
</dbReference>
<dbReference type="STRING" id="9031.ENSGALP00000036691"/>
<dbReference type="GlyGen" id="P08070">
    <property type="glycosylation" value="1 site"/>
</dbReference>
<dbReference type="PaxDb" id="9031-ENSGALP00000036691"/>
<dbReference type="GeneID" id="396426"/>
<dbReference type="KEGG" id="gga:396426"/>
<dbReference type="CTD" id="396426"/>
<dbReference type="VEuPathDB" id="HostDB:geneid_396426"/>
<dbReference type="eggNOG" id="KOG1376">
    <property type="taxonomic scope" value="Eukaryota"/>
</dbReference>
<dbReference type="InParanoid" id="P08070"/>
<dbReference type="OrthoDB" id="1662883at2759"/>
<dbReference type="PhylomeDB" id="P08070"/>
<dbReference type="PRO" id="PR:P08070"/>
<dbReference type="Proteomes" id="UP000000539">
    <property type="component" value="Unassembled WGS sequence"/>
</dbReference>
<dbReference type="GO" id="GO:0005737">
    <property type="term" value="C:cytoplasm"/>
    <property type="evidence" value="ECO:0000318"/>
    <property type="project" value="GO_Central"/>
</dbReference>
<dbReference type="GO" id="GO:0005874">
    <property type="term" value="C:microtubule"/>
    <property type="evidence" value="ECO:0000318"/>
    <property type="project" value="GO_Central"/>
</dbReference>
<dbReference type="GO" id="GO:0005525">
    <property type="term" value="F:GTP binding"/>
    <property type="evidence" value="ECO:0000318"/>
    <property type="project" value="GO_Central"/>
</dbReference>
<dbReference type="GO" id="GO:0016787">
    <property type="term" value="F:hydrolase activity"/>
    <property type="evidence" value="ECO:0007669"/>
    <property type="project" value="UniProtKB-KW"/>
</dbReference>
<dbReference type="GO" id="GO:0046872">
    <property type="term" value="F:metal ion binding"/>
    <property type="evidence" value="ECO:0007669"/>
    <property type="project" value="UniProtKB-KW"/>
</dbReference>
<dbReference type="GO" id="GO:0005200">
    <property type="term" value="F:structural constituent of cytoskeleton"/>
    <property type="evidence" value="ECO:0000318"/>
    <property type="project" value="GO_Central"/>
</dbReference>
<dbReference type="GO" id="GO:0000226">
    <property type="term" value="P:microtubule cytoskeleton organization"/>
    <property type="evidence" value="ECO:0000318"/>
    <property type="project" value="GO_Central"/>
</dbReference>
<dbReference type="GO" id="GO:0000278">
    <property type="term" value="P:mitotic cell cycle"/>
    <property type="evidence" value="ECO:0000318"/>
    <property type="project" value="GO_Central"/>
</dbReference>
<dbReference type="CDD" id="cd02186">
    <property type="entry name" value="alpha_tubulin"/>
    <property type="match status" value="1"/>
</dbReference>
<dbReference type="FunFam" id="1.10.287.600:FF:000005">
    <property type="entry name" value="Tubulin alpha chain"/>
    <property type="match status" value="1"/>
</dbReference>
<dbReference type="FunFam" id="3.30.1330.20:FF:000001">
    <property type="entry name" value="Tubulin alpha chain"/>
    <property type="match status" value="1"/>
</dbReference>
<dbReference type="FunFam" id="3.40.50.1440:FF:000002">
    <property type="entry name" value="Tubulin alpha chain"/>
    <property type="match status" value="1"/>
</dbReference>
<dbReference type="Gene3D" id="1.10.287.600">
    <property type="entry name" value="Helix hairpin bin"/>
    <property type="match status" value="1"/>
</dbReference>
<dbReference type="Gene3D" id="3.30.1330.20">
    <property type="entry name" value="Tubulin/FtsZ, C-terminal domain"/>
    <property type="match status" value="1"/>
</dbReference>
<dbReference type="Gene3D" id="3.40.50.1440">
    <property type="entry name" value="Tubulin/FtsZ, GTPase domain"/>
    <property type="match status" value="1"/>
</dbReference>
<dbReference type="InterPro" id="IPR002452">
    <property type="entry name" value="Alpha_tubulin"/>
</dbReference>
<dbReference type="InterPro" id="IPR008280">
    <property type="entry name" value="Tub_FtsZ_C"/>
</dbReference>
<dbReference type="InterPro" id="IPR000217">
    <property type="entry name" value="Tubulin"/>
</dbReference>
<dbReference type="InterPro" id="IPR037103">
    <property type="entry name" value="Tubulin/FtsZ-like_C"/>
</dbReference>
<dbReference type="InterPro" id="IPR018316">
    <property type="entry name" value="Tubulin/FtsZ_2-layer-sand-dom"/>
</dbReference>
<dbReference type="InterPro" id="IPR036525">
    <property type="entry name" value="Tubulin/FtsZ_GTPase_sf"/>
</dbReference>
<dbReference type="InterPro" id="IPR023123">
    <property type="entry name" value="Tubulin_C"/>
</dbReference>
<dbReference type="InterPro" id="IPR017975">
    <property type="entry name" value="Tubulin_CS"/>
</dbReference>
<dbReference type="InterPro" id="IPR003008">
    <property type="entry name" value="Tubulin_FtsZ_GTPase"/>
</dbReference>
<dbReference type="PANTHER" id="PTHR11588">
    <property type="entry name" value="TUBULIN"/>
    <property type="match status" value="1"/>
</dbReference>
<dbReference type="Pfam" id="PF00091">
    <property type="entry name" value="Tubulin"/>
    <property type="match status" value="1"/>
</dbReference>
<dbReference type="Pfam" id="PF03953">
    <property type="entry name" value="Tubulin_C"/>
    <property type="match status" value="1"/>
</dbReference>
<dbReference type="PRINTS" id="PR01162">
    <property type="entry name" value="ALPHATUBULIN"/>
</dbReference>
<dbReference type="PRINTS" id="PR01161">
    <property type="entry name" value="TUBULIN"/>
</dbReference>
<dbReference type="SMART" id="SM00864">
    <property type="entry name" value="Tubulin"/>
    <property type="match status" value="1"/>
</dbReference>
<dbReference type="SMART" id="SM00865">
    <property type="entry name" value="Tubulin_C"/>
    <property type="match status" value="1"/>
</dbReference>
<dbReference type="SUPFAM" id="SSF55307">
    <property type="entry name" value="Tubulin C-terminal domain-like"/>
    <property type="match status" value="1"/>
</dbReference>
<dbReference type="SUPFAM" id="SSF52490">
    <property type="entry name" value="Tubulin nucleotide-binding domain-like"/>
    <property type="match status" value="1"/>
</dbReference>
<dbReference type="PROSITE" id="PS00227">
    <property type="entry name" value="TUBULIN"/>
    <property type="match status" value="1"/>
</dbReference>
<name>TBA2_CHICK</name>
<proteinExistence type="evidence at transcript level"/>
<feature type="chain" id="PRO_0000048148" description="Tubulin alpha-2 chain">
    <location>
        <begin position="1"/>
        <end position="446"/>
    </location>
</feature>
<feature type="short sequence motif" description="MREC motif" evidence="1">
    <location>
        <begin position="1"/>
        <end position="4"/>
    </location>
</feature>
<feature type="active site" evidence="1">
    <location>
        <position position="251"/>
    </location>
</feature>
<feature type="binding site" evidence="1">
    <location>
        <position position="11"/>
    </location>
    <ligand>
        <name>GTP</name>
        <dbReference type="ChEBI" id="CHEBI:37565"/>
    </ligand>
</feature>
<feature type="binding site" evidence="1">
    <location>
        <position position="68"/>
    </location>
    <ligand>
        <name>GTP</name>
        <dbReference type="ChEBI" id="CHEBI:37565"/>
    </ligand>
</feature>
<feature type="binding site" evidence="1">
    <location>
        <position position="68"/>
    </location>
    <ligand>
        <name>Mg(2+)</name>
        <dbReference type="ChEBI" id="CHEBI:18420"/>
    </ligand>
</feature>
<feature type="binding site" evidence="1">
    <location>
        <position position="137"/>
    </location>
    <ligand>
        <name>GTP</name>
        <dbReference type="ChEBI" id="CHEBI:37565"/>
    </ligand>
</feature>
<feature type="binding site" evidence="1">
    <location>
        <position position="141"/>
    </location>
    <ligand>
        <name>GTP</name>
        <dbReference type="ChEBI" id="CHEBI:37565"/>
    </ligand>
</feature>
<feature type="binding site" evidence="1">
    <location>
        <position position="142"/>
    </location>
    <ligand>
        <name>GTP</name>
        <dbReference type="ChEBI" id="CHEBI:37565"/>
    </ligand>
</feature>
<feature type="binding site" evidence="1">
    <location>
        <position position="176"/>
    </location>
    <ligand>
        <name>GTP</name>
        <dbReference type="ChEBI" id="CHEBI:37565"/>
    </ligand>
</feature>
<feature type="binding site" evidence="1">
    <location>
        <position position="203"/>
    </location>
    <ligand>
        <name>GTP</name>
        <dbReference type="ChEBI" id="CHEBI:37565"/>
    </ligand>
</feature>
<feature type="binding site" evidence="1">
    <location>
        <position position="225"/>
    </location>
    <ligand>
        <name>GTP</name>
        <dbReference type="ChEBI" id="CHEBI:37565"/>
    </ligand>
</feature>
<evidence type="ECO:0000250" key="1">
    <source>
        <dbReference type="UniProtKB" id="P68363"/>
    </source>
</evidence>
<evidence type="ECO:0000250" key="2">
    <source>
        <dbReference type="UniProtKB" id="P68369"/>
    </source>
</evidence>
<evidence type="ECO:0000250" key="3">
    <source>
        <dbReference type="UniProtKB" id="Q71U36"/>
    </source>
</evidence>
<evidence type="ECO:0000305" key="4"/>
<protein>
    <recommendedName>
        <fullName>Tubulin alpha-2 chain</fullName>
        <ecNumber evidence="1">3.6.5.-</ecNumber>
    </recommendedName>
    <alternativeName>
        <fullName>Testis-specific</fullName>
    </alternativeName>
</protein>
<sequence>MRECISVHIGQAGVQIGNACWELFCLEHSIQPDGTFSDPPSSDDSFATFFRETSMSKYVPRAIMVDLEPTVVDEVRTGTYRHLFHPEQLITGKEDAANNYARGHYTVGKDKVDMVSDRIRKLADSCSGLQGFLIFHSFGGGTGSGFTSLLMERLSVEYGKKSKLEFAIYPAPQASSAVVEPYNSVLTTHTTLEHSDCVFMVDNEAIYDICHRNLDIERPTYTNLNRLISQIVSSITASLRFDGALNVDLTEFQTNLVPFPRIHFPLVTYAPIISSDRAYHEQLSVAEITSSCFEPNNQMVKCDPQQGKYMACCMLYRGDVVPKDVNVAIAAIKTNRSLQFVDWCPTGFKVGINYQPPIPTPGGDLAQVQRAVCMLSNTTAIAEAWARLDHKFDLMYAKRAFVHWYVSEGMEEGEFAEAREDLAALEKDYDEVATDLFEDENEAGDS</sequence>